<reference key="1">
    <citation type="journal article" date="2007" name="Genome Res.">
        <title>Genome characteristics of facultatively symbiotic Frankia sp. strains reflect host range and host plant biogeography.</title>
        <authorList>
            <person name="Normand P."/>
            <person name="Lapierre P."/>
            <person name="Tisa L.S."/>
            <person name="Gogarten J.P."/>
            <person name="Alloisio N."/>
            <person name="Bagnarol E."/>
            <person name="Bassi C.A."/>
            <person name="Berry A.M."/>
            <person name="Bickhart D.M."/>
            <person name="Choisne N."/>
            <person name="Couloux A."/>
            <person name="Cournoyer B."/>
            <person name="Cruveiller S."/>
            <person name="Daubin V."/>
            <person name="Demange N."/>
            <person name="Francino M.P."/>
            <person name="Goltsman E."/>
            <person name="Huang Y."/>
            <person name="Kopp O.R."/>
            <person name="Labarre L."/>
            <person name="Lapidus A."/>
            <person name="Lavire C."/>
            <person name="Marechal J."/>
            <person name="Martinez M."/>
            <person name="Mastronunzio J.E."/>
            <person name="Mullin B.C."/>
            <person name="Niemann J."/>
            <person name="Pujic P."/>
            <person name="Rawnsley T."/>
            <person name="Rouy Z."/>
            <person name="Schenowitz C."/>
            <person name="Sellstedt A."/>
            <person name="Tavares F."/>
            <person name="Tomkins J.P."/>
            <person name="Vallenet D."/>
            <person name="Valverde C."/>
            <person name="Wall L.G."/>
            <person name="Wang Y."/>
            <person name="Medigue C."/>
            <person name="Benson D.R."/>
        </authorList>
    </citation>
    <scope>NUCLEOTIDE SEQUENCE [LARGE SCALE GENOMIC DNA]</scope>
    <source>
        <strain>DSM 45986 / CECT 9034 / ACN14a</strain>
    </source>
</reference>
<accession>Q0RDW7</accession>
<comment type="function">
    <text evidence="1">Endoribonuclease that initiates mRNA decay.</text>
</comment>
<comment type="subcellular location">
    <subcellularLocation>
        <location evidence="1">Cell membrane</location>
        <topology evidence="1">Single-pass membrane protein</topology>
    </subcellularLocation>
</comment>
<comment type="similarity">
    <text evidence="1">Belongs to the RNase Y family.</text>
</comment>
<organism>
    <name type="scientific">Frankia alni (strain DSM 45986 / CECT 9034 / ACN14a)</name>
    <dbReference type="NCBI Taxonomy" id="326424"/>
    <lineage>
        <taxon>Bacteria</taxon>
        <taxon>Bacillati</taxon>
        <taxon>Actinomycetota</taxon>
        <taxon>Actinomycetes</taxon>
        <taxon>Frankiales</taxon>
        <taxon>Frankiaceae</taxon>
        <taxon>Frankia</taxon>
    </lineage>
</organism>
<feature type="chain" id="PRO_0000344876" description="Ribonuclease Y">
    <location>
        <begin position="1"/>
        <end position="725"/>
    </location>
</feature>
<feature type="transmembrane region" description="Helical" evidence="1">
    <location>
        <begin position="4"/>
        <end position="24"/>
    </location>
</feature>
<feature type="domain" description="KH" evidence="1">
    <location>
        <begin position="415"/>
        <end position="481"/>
    </location>
</feature>
<feature type="domain" description="HD" evidence="2">
    <location>
        <begin position="541"/>
        <end position="634"/>
    </location>
</feature>
<feature type="region of interest" description="Disordered" evidence="3">
    <location>
        <begin position="62"/>
        <end position="140"/>
    </location>
</feature>
<feature type="region of interest" description="Disordered" evidence="3">
    <location>
        <begin position="165"/>
        <end position="195"/>
    </location>
</feature>
<feature type="region of interest" description="Disordered" evidence="3">
    <location>
        <begin position="300"/>
        <end position="321"/>
    </location>
</feature>
<feature type="compositionally biased region" description="Low complexity" evidence="3">
    <location>
        <begin position="84"/>
        <end position="100"/>
    </location>
</feature>
<feature type="compositionally biased region" description="Low complexity" evidence="3">
    <location>
        <begin position="114"/>
        <end position="137"/>
    </location>
</feature>
<protein>
    <recommendedName>
        <fullName evidence="1">Ribonuclease Y</fullName>
        <shortName evidence="1">RNase Y</shortName>
        <ecNumber evidence="1">3.1.-.-</ecNumber>
    </recommendedName>
</protein>
<sequence length="725" mass="77751">MDGVLVILLSLVLLVLVALILAVAWLARTARGDRHYGAATRATRSSSGMAASVDALALDDDDGPAVRVLPPVRPAAEGERPAGDAPGAAYGESAAAPDAGLGSPAPRAPHHDAAAAPEPGAAIGGAPTPAAGSPADASDTGRIAETVDTGTVLAVAAVADTPSRVAATEDTSLEAPLRESALRESAPGESASVRRAAEREAAQIVARAEREAAERLARVEREAAEIRRRGEDEVASLRNQARAEAAADASRAEAAVRDAARVELEAARAEIATARTSFEEELRVRRAELRGREEALAAREQRVEERTAGLDEHASRLAGREQDLLDREDELAHRTAEAADDEAARQAALERIAELTAVQARAELVSTIEHEARREAALLVREIEARAEEEGEERARRIVTTAIQRVASDQTTESVVTVLHLPGDEMKGRIIGREGRNIRTFESVTGVNVLIDDTPEAVLLSCFDPVRREIGRITLAALVSDGRIHPHRIEEEYARAQVEVEERCVRAGEDALLETGISEMHPELVTLLGRLRYRTSYGQNVLAHLIESAHLAGIMAAELRMALPLAKRAALLHDLGKALTHEVEGSHALIGADVARRYGESEEVVHAIEAHHNEVAPRSLCAVLTQAADQISGGRPGARRDSLESYVKRLERIEQIAGDRPGVDRVFAMQAGREVRVMVVPEEVDDVAAHLLARDVARQIEDELTYPGQIRVTVVRETRAVGTAR</sequence>
<keyword id="KW-1003">Cell membrane</keyword>
<keyword id="KW-0255">Endonuclease</keyword>
<keyword id="KW-0378">Hydrolase</keyword>
<keyword id="KW-0472">Membrane</keyword>
<keyword id="KW-0540">Nuclease</keyword>
<keyword id="KW-1185">Reference proteome</keyword>
<keyword id="KW-0694">RNA-binding</keyword>
<keyword id="KW-0812">Transmembrane</keyword>
<keyword id="KW-1133">Transmembrane helix</keyword>
<name>RNY_FRAAA</name>
<proteinExistence type="inferred from homology"/>
<evidence type="ECO:0000255" key="1">
    <source>
        <dbReference type="HAMAP-Rule" id="MF_00335"/>
    </source>
</evidence>
<evidence type="ECO:0000255" key="2">
    <source>
        <dbReference type="PROSITE-ProRule" id="PRU01175"/>
    </source>
</evidence>
<evidence type="ECO:0000256" key="3">
    <source>
        <dbReference type="SAM" id="MobiDB-lite"/>
    </source>
</evidence>
<gene>
    <name evidence="1" type="primary">rny</name>
    <name type="ordered locus">FRAAL5717</name>
</gene>
<dbReference type="EC" id="3.1.-.-" evidence="1"/>
<dbReference type="EMBL" id="CT573213">
    <property type="protein sequence ID" value="CAJ64349.1"/>
    <property type="molecule type" value="Genomic_DNA"/>
</dbReference>
<dbReference type="RefSeq" id="WP_011606791.1">
    <property type="nucleotide sequence ID" value="NC_008278.1"/>
</dbReference>
<dbReference type="SMR" id="Q0RDW7"/>
<dbReference type="STRING" id="326424.FRAAL5717"/>
<dbReference type="KEGG" id="fal:FRAAL5717"/>
<dbReference type="eggNOG" id="COG1418">
    <property type="taxonomic scope" value="Bacteria"/>
</dbReference>
<dbReference type="HOGENOM" id="CLU_028328_1_0_11"/>
<dbReference type="OrthoDB" id="9803205at2"/>
<dbReference type="Proteomes" id="UP000000657">
    <property type="component" value="Chromosome"/>
</dbReference>
<dbReference type="GO" id="GO:0005886">
    <property type="term" value="C:plasma membrane"/>
    <property type="evidence" value="ECO:0007669"/>
    <property type="project" value="UniProtKB-SubCell"/>
</dbReference>
<dbReference type="GO" id="GO:0003723">
    <property type="term" value="F:RNA binding"/>
    <property type="evidence" value="ECO:0007669"/>
    <property type="project" value="UniProtKB-UniRule"/>
</dbReference>
<dbReference type="GO" id="GO:0004521">
    <property type="term" value="F:RNA endonuclease activity"/>
    <property type="evidence" value="ECO:0007669"/>
    <property type="project" value="UniProtKB-UniRule"/>
</dbReference>
<dbReference type="GO" id="GO:0006402">
    <property type="term" value="P:mRNA catabolic process"/>
    <property type="evidence" value="ECO:0007669"/>
    <property type="project" value="UniProtKB-UniRule"/>
</dbReference>
<dbReference type="CDD" id="cd00077">
    <property type="entry name" value="HDc"/>
    <property type="match status" value="1"/>
</dbReference>
<dbReference type="CDD" id="cd22431">
    <property type="entry name" value="KH-I_RNaseY"/>
    <property type="match status" value="1"/>
</dbReference>
<dbReference type="Gene3D" id="1.10.3210.10">
    <property type="entry name" value="Hypothetical protein af1432"/>
    <property type="match status" value="1"/>
</dbReference>
<dbReference type="HAMAP" id="MF_00335">
    <property type="entry name" value="RNase_Y"/>
    <property type="match status" value="1"/>
</dbReference>
<dbReference type="InterPro" id="IPR003607">
    <property type="entry name" value="HD/PDEase_dom"/>
</dbReference>
<dbReference type="InterPro" id="IPR006674">
    <property type="entry name" value="HD_domain"/>
</dbReference>
<dbReference type="InterPro" id="IPR006675">
    <property type="entry name" value="HDIG_dom"/>
</dbReference>
<dbReference type="InterPro" id="IPR004087">
    <property type="entry name" value="KH_dom"/>
</dbReference>
<dbReference type="InterPro" id="IPR004088">
    <property type="entry name" value="KH_dom_type_1"/>
</dbReference>
<dbReference type="InterPro" id="IPR036612">
    <property type="entry name" value="KH_dom_type_1_sf"/>
</dbReference>
<dbReference type="InterPro" id="IPR017705">
    <property type="entry name" value="Ribonuclease_Y"/>
</dbReference>
<dbReference type="InterPro" id="IPR022711">
    <property type="entry name" value="RNase_Y_N"/>
</dbReference>
<dbReference type="NCBIfam" id="TIGR00277">
    <property type="entry name" value="HDIG"/>
    <property type="match status" value="1"/>
</dbReference>
<dbReference type="NCBIfam" id="TIGR03319">
    <property type="entry name" value="RNase_Y"/>
    <property type="match status" value="1"/>
</dbReference>
<dbReference type="PANTHER" id="PTHR12826">
    <property type="entry name" value="RIBONUCLEASE Y"/>
    <property type="match status" value="1"/>
</dbReference>
<dbReference type="PANTHER" id="PTHR12826:SF15">
    <property type="entry name" value="RIBONUCLEASE Y"/>
    <property type="match status" value="1"/>
</dbReference>
<dbReference type="Pfam" id="PF01966">
    <property type="entry name" value="HD"/>
    <property type="match status" value="1"/>
</dbReference>
<dbReference type="Pfam" id="PF00013">
    <property type="entry name" value="KH_1"/>
    <property type="match status" value="1"/>
</dbReference>
<dbReference type="Pfam" id="PF12072">
    <property type="entry name" value="RNase_Y_N"/>
    <property type="match status" value="1"/>
</dbReference>
<dbReference type="SMART" id="SM00471">
    <property type="entry name" value="HDc"/>
    <property type="match status" value="1"/>
</dbReference>
<dbReference type="SMART" id="SM00322">
    <property type="entry name" value="KH"/>
    <property type="match status" value="1"/>
</dbReference>
<dbReference type="SUPFAM" id="SSF54791">
    <property type="entry name" value="Eukaryotic type KH-domain (KH-domain type I)"/>
    <property type="match status" value="1"/>
</dbReference>
<dbReference type="SUPFAM" id="SSF109604">
    <property type="entry name" value="HD-domain/PDEase-like"/>
    <property type="match status" value="1"/>
</dbReference>
<dbReference type="PROSITE" id="PS51831">
    <property type="entry name" value="HD"/>
    <property type="match status" value="1"/>
</dbReference>
<dbReference type="PROSITE" id="PS50084">
    <property type="entry name" value="KH_TYPE_1"/>
    <property type="match status" value="1"/>
</dbReference>